<reference key="1">
    <citation type="submission" date="2006-03" db="EMBL/GenBank/DDBJ databases">
        <title>Complete genome sequence of Francisella tularensis LVS (Live Vaccine Strain).</title>
        <authorList>
            <person name="Chain P."/>
            <person name="Larimer F."/>
            <person name="Land M."/>
            <person name="Stilwagen S."/>
            <person name="Larsson P."/>
            <person name="Bearden S."/>
            <person name="Chu M."/>
            <person name="Oyston P."/>
            <person name="Forsman M."/>
            <person name="Andersson S."/>
            <person name="Lindler L."/>
            <person name="Titball R."/>
            <person name="Garcia E."/>
        </authorList>
    </citation>
    <scope>NUCLEOTIDE SEQUENCE [LARGE SCALE GENOMIC DNA]</scope>
    <source>
        <strain>LVS</strain>
    </source>
</reference>
<protein>
    <recommendedName>
        <fullName evidence="1">Glycerol-3-phosphate acyltransferase</fullName>
    </recommendedName>
    <alternativeName>
        <fullName evidence="1">Acyl-PO4 G3P acyltransferase</fullName>
    </alternativeName>
    <alternativeName>
        <fullName evidence="1">Acyl-phosphate--glycerol-3-phosphate acyltransferase</fullName>
    </alternativeName>
    <alternativeName>
        <fullName evidence="1">G3P acyltransferase</fullName>
        <shortName evidence="1">GPAT</shortName>
        <ecNumber evidence="1">2.3.1.275</ecNumber>
    </alternativeName>
    <alternativeName>
        <fullName evidence="1">Lysophosphatidic acid synthase</fullName>
        <shortName evidence="1">LPA synthase</shortName>
    </alternativeName>
</protein>
<gene>
    <name evidence="1" type="primary">plsY</name>
    <name type="ordered locus">FTL_0839</name>
</gene>
<feature type="chain" id="PRO_0000250302" description="Glycerol-3-phosphate acyltransferase">
    <location>
        <begin position="1"/>
        <end position="204"/>
    </location>
</feature>
<feature type="transmembrane region" description="Helical" evidence="1">
    <location>
        <begin position="8"/>
        <end position="28"/>
    </location>
</feature>
<feature type="transmembrane region" description="Helical" evidence="1">
    <location>
        <begin position="53"/>
        <end position="73"/>
    </location>
</feature>
<feature type="transmembrane region" description="Helical" evidence="1">
    <location>
        <begin position="81"/>
        <end position="101"/>
    </location>
</feature>
<feature type="transmembrane region" description="Helical" evidence="1">
    <location>
        <begin position="116"/>
        <end position="136"/>
    </location>
</feature>
<feature type="transmembrane region" description="Helical" evidence="1">
    <location>
        <begin position="155"/>
        <end position="175"/>
    </location>
</feature>
<dbReference type="EC" id="2.3.1.275" evidence="1"/>
<dbReference type="EMBL" id="AM233362">
    <property type="protein sequence ID" value="CAJ79278.1"/>
    <property type="molecule type" value="Genomic_DNA"/>
</dbReference>
<dbReference type="RefSeq" id="WP_003015429.1">
    <property type="nucleotide sequence ID" value="NZ_CP009694.1"/>
</dbReference>
<dbReference type="SMR" id="Q2A3Z1"/>
<dbReference type="KEGG" id="ftl:FTL_0839"/>
<dbReference type="UniPathway" id="UPA00085"/>
<dbReference type="Proteomes" id="UP000001944">
    <property type="component" value="Chromosome"/>
</dbReference>
<dbReference type="GO" id="GO:0005886">
    <property type="term" value="C:plasma membrane"/>
    <property type="evidence" value="ECO:0007669"/>
    <property type="project" value="UniProtKB-SubCell"/>
</dbReference>
<dbReference type="GO" id="GO:0043772">
    <property type="term" value="F:acyl-phosphate glycerol-3-phosphate acyltransferase activity"/>
    <property type="evidence" value="ECO:0007669"/>
    <property type="project" value="UniProtKB-UniRule"/>
</dbReference>
<dbReference type="GO" id="GO:0008654">
    <property type="term" value="P:phospholipid biosynthetic process"/>
    <property type="evidence" value="ECO:0007669"/>
    <property type="project" value="UniProtKB-UniRule"/>
</dbReference>
<dbReference type="HAMAP" id="MF_01043">
    <property type="entry name" value="PlsY"/>
    <property type="match status" value="1"/>
</dbReference>
<dbReference type="InterPro" id="IPR003811">
    <property type="entry name" value="G3P_acylTferase_PlsY"/>
</dbReference>
<dbReference type="NCBIfam" id="TIGR00023">
    <property type="entry name" value="glycerol-3-phosphate 1-O-acyltransferase PlsY"/>
    <property type="match status" value="1"/>
</dbReference>
<dbReference type="PANTHER" id="PTHR30309:SF0">
    <property type="entry name" value="GLYCEROL-3-PHOSPHATE ACYLTRANSFERASE-RELATED"/>
    <property type="match status" value="1"/>
</dbReference>
<dbReference type="PANTHER" id="PTHR30309">
    <property type="entry name" value="INNER MEMBRANE PROTEIN YGIH"/>
    <property type="match status" value="1"/>
</dbReference>
<dbReference type="Pfam" id="PF02660">
    <property type="entry name" value="G3P_acyltransf"/>
    <property type="match status" value="1"/>
</dbReference>
<dbReference type="SMART" id="SM01207">
    <property type="entry name" value="G3P_acyltransf"/>
    <property type="match status" value="1"/>
</dbReference>
<accession>Q2A3Z1</accession>
<organism>
    <name type="scientific">Francisella tularensis subsp. holarctica (strain LVS)</name>
    <dbReference type="NCBI Taxonomy" id="376619"/>
    <lineage>
        <taxon>Bacteria</taxon>
        <taxon>Pseudomonadati</taxon>
        <taxon>Pseudomonadota</taxon>
        <taxon>Gammaproteobacteria</taxon>
        <taxon>Thiotrichales</taxon>
        <taxon>Francisellaceae</taxon>
        <taxon>Francisella</taxon>
    </lineage>
</organism>
<keyword id="KW-0997">Cell inner membrane</keyword>
<keyword id="KW-1003">Cell membrane</keyword>
<keyword id="KW-0444">Lipid biosynthesis</keyword>
<keyword id="KW-0443">Lipid metabolism</keyword>
<keyword id="KW-0472">Membrane</keyword>
<keyword id="KW-0594">Phospholipid biosynthesis</keyword>
<keyword id="KW-1208">Phospholipid metabolism</keyword>
<keyword id="KW-1185">Reference proteome</keyword>
<keyword id="KW-0808">Transferase</keyword>
<keyword id="KW-0812">Transmembrane</keyword>
<keyword id="KW-1133">Transmembrane helix</keyword>
<proteinExistence type="inferred from homology"/>
<name>PLSY_FRATH</name>
<sequence length="204" mass="21766">MNFLNFSILIFAYLLGSINSAIIVCYIFRLPSPRSVGSGNPGTTNVLRIGGKVPAAITLIFDILKGLVPVVIAKVLTGNDFITACTALYAILGHIFPIFFGFKGGKGVATLIGTLFGFSWILGLIFVITWLCVAIITRYSSLSALVATVIASFSVIFTSDLQVAAPFLIIAIIILVKHKGNIQRLISGQESKIGDKAKAKNDSN</sequence>
<evidence type="ECO:0000255" key="1">
    <source>
        <dbReference type="HAMAP-Rule" id="MF_01043"/>
    </source>
</evidence>
<comment type="function">
    <text evidence="1">Catalyzes the transfer of an acyl group from acyl-phosphate (acyl-PO(4)) to glycerol-3-phosphate (G3P) to form lysophosphatidic acid (LPA). This enzyme utilizes acyl-phosphate as fatty acyl donor, but not acyl-CoA or acyl-ACP.</text>
</comment>
<comment type="catalytic activity">
    <reaction evidence="1">
        <text>an acyl phosphate + sn-glycerol 3-phosphate = a 1-acyl-sn-glycero-3-phosphate + phosphate</text>
        <dbReference type="Rhea" id="RHEA:34075"/>
        <dbReference type="ChEBI" id="CHEBI:43474"/>
        <dbReference type="ChEBI" id="CHEBI:57597"/>
        <dbReference type="ChEBI" id="CHEBI:57970"/>
        <dbReference type="ChEBI" id="CHEBI:59918"/>
        <dbReference type="EC" id="2.3.1.275"/>
    </reaction>
</comment>
<comment type="pathway">
    <text evidence="1">Lipid metabolism; phospholipid metabolism.</text>
</comment>
<comment type="subunit">
    <text evidence="1">Probably interacts with PlsX.</text>
</comment>
<comment type="subcellular location">
    <subcellularLocation>
        <location evidence="1">Cell inner membrane</location>
        <topology evidence="1">Multi-pass membrane protein</topology>
    </subcellularLocation>
</comment>
<comment type="similarity">
    <text evidence="1">Belongs to the PlsY family.</text>
</comment>